<reference key="1">
    <citation type="journal article" date="2004" name="Genome Res.">
        <title>The complete genome and proteome of Mycoplasma mobile.</title>
        <authorList>
            <person name="Jaffe J.D."/>
            <person name="Stange-Thomann N."/>
            <person name="Smith C."/>
            <person name="DeCaprio D."/>
            <person name="Fisher S."/>
            <person name="Butler J."/>
            <person name="Calvo S."/>
            <person name="Elkins T."/>
            <person name="FitzGerald M.G."/>
            <person name="Hafez N."/>
            <person name="Kodira C.D."/>
            <person name="Major J."/>
            <person name="Wang S."/>
            <person name="Wilkinson J."/>
            <person name="Nicol R."/>
            <person name="Nusbaum C."/>
            <person name="Birren B."/>
            <person name="Berg H.C."/>
            <person name="Church G.M."/>
        </authorList>
    </citation>
    <scope>NUCLEOTIDE SEQUENCE [LARGE SCALE GENOMIC DNA]</scope>
    <source>
        <strain>ATCC 43663 / NCTC 11711 / 163 K</strain>
    </source>
</reference>
<sequence>MSELDNKKDKSKDSNKKPKKPGAFSIGNIIIFVIVALLLIWVVFAFLPNNPGTNKSFDGFLKDLQDAARLGDDTIFFRNISFDVVLSRFNVTFVNGATTSSYFVNYPSSVAFQNLQIPGTTFTGLELATLAIANTSASGIGTLNFSGLVTPTNQALAILLSLIPTFLFVGIIFFVYKMQSKANGGMGGFNPGKNQAERIYTKIKFSDIAGNEEVKEEVAELVDYLKNPKKYSASGARIPRGILLGGPPGTGKTLLAKATAGEANVPFYFISGSNFVELFVGVGAKRVRELFKEARKSSPAIIFIDELDAVGRSRGAGIGGGNDEREQTLNQLLVEMDGMTENSGLLVMAATNRTDVLDPALLRPGRFDRTVTVGLPNVKDREAILKLHAKGKRISSEVSFQQLAKRTPGYSGAQLENVINEASLLSVREDTKIITLEQFDEAIDRVMSGPAKKSRVITKEELTAVAYHEAGHAVVGTQLRKGVKVQKITIIPRGSAGGYNLMIPEEEKYNSSKSELIAMITSFMGGRAAEQIIYGEKEVSTGARDDIKKATSIARKMVTEWGMSDLGPIMYEEDTSNPFLGRDYTKNQLFSDHIAREIDTEVRKIILTAEQKAIEVIQENREMLELIKEALLENETIVDEEIQYIAKNLKLPSMRTKAKSENVNQIRNVDELVKEVKDQTLIIKDKNDKKIKDSENNIKTDESLDIK</sequence>
<evidence type="ECO:0000255" key="1">
    <source>
        <dbReference type="HAMAP-Rule" id="MF_01458"/>
    </source>
</evidence>
<accession>Q6KHA4</accession>
<gene>
    <name evidence="1" type="primary">ftsH</name>
    <name type="ordered locus">MMOB5400</name>
</gene>
<dbReference type="EC" id="3.4.24.-" evidence="1"/>
<dbReference type="EMBL" id="AE017308">
    <property type="protein sequence ID" value="AAT28026.1"/>
    <property type="molecule type" value="Genomic_DNA"/>
</dbReference>
<dbReference type="RefSeq" id="WP_011265060.1">
    <property type="nucleotide sequence ID" value="NC_006908.1"/>
</dbReference>
<dbReference type="SMR" id="Q6KHA4"/>
<dbReference type="STRING" id="267748.MMOB5400"/>
<dbReference type="KEGG" id="mmo:MMOB5400"/>
<dbReference type="eggNOG" id="COG0465">
    <property type="taxonomic scope" value="Bacteria"/>
</dbReference>
<dbReference type="HOGENOM" id="CLU_000688_16_2_14"/>
<dbReference type="OrthoDB" id="9809379at2"/>
<dbReference type="Proteomes" id="UP000009072">
    <property type="component" value="Chromosome"/>
</dbReference>
<dbReference type="GO" id="GO:0005886">
    <property type="term" value="C:plasma membrane"/>
    <property type="evidence" value="ECO:0007669"/>
    <property type="project" value="UniProtKB-SubCell"/>
</dbReference>
<dbReference type="GO" id="GO:0005524">
    <property type="term" value="F:ATP binding"/>
    <property type="evidence" value="ECO:0007669"/>
    <property type="project" value="UniProtKB-UniRule"/>
</dbReference>
<dbReference type="GO" id="GO:0016887">
    <property type="term" value="F:ATP hydrolysis activity"/>
    <property type="evidence" value="ECO:0007669"/>
    <property type="project" value="UniProtKB-UniRule"/>
</dbReference>
<dbReference type="GO" id="GO:0004176">
    <property type="term" value="F:ATP-dependent peptidase activity"/>
    <property type="evidence" value="ECO:0007669"/>
    <property type="project" value="InterPro"/>
</dbReference>
<dbReference type="GO" id="GO:0004222">
    <property type="term" value="F:metalloendopeptidase activity"/>
    <property type="evidence" value="ECO:0007669"/>
    <property type="project" value="InterPro"/>
</dbReference>
<dbReference type="GO" id="GO:0008270">
    <property type="term" value="F:zinc ion binding"/>
    <property type="evidence" value="ECO:0007669"/>
    <property type="project" value="UniProtKB-UniRule"/>
</dbReference>
<dbReference type="GO" id="GO:0030163">
    <property type="term" value="P:protein catabolic process"/>
    <property type="evidence" value="ECO:0007669"/>
    <property type="project" value="UniProtKB-UniRule"/>
</dbReference>
<dbReference type="GO" id="GO:0006508">
    <property type="term" value="P:proteolysis"/>
    <property type="evidence" value="ECO:0007669"/>
    <property type="project" value="UniProtKB-KW"/>
</dbReference>
<dbReference type="CDD" id="cd19501">
    <property type="entry name" value="RecA-like_FtsH"/>
    <property type="match status" value="1"/>
</dbReference>
<dbReference type="FunFam" id="1.10.8.60:FF:000001">
    <property type="entry name" value="ATP-dependent zinc metalloprotease FtsH"/>
    <property type="match status" value="1"/>
</dbReference>
<dbReference type="FunFam" id="1.20.58.760:FF:000001">
    <property type="entry name" value="ATP-dependent zinc metalloprotease FtsH"/>
    <property type="match status" value="1"/>
</dbReference>
<dbReference type="FunFam" id="3.40.50.300:FF:000001">
    <property type="entry name" value="ATP-dependent zinc metalloprotease FtsH"/>
    <property type="match status" value="1"/>
</dbReference>
<dbReference type="Gene3D" id="1.10.8.60">
    <property type="match status" value="1"/>
</dbReference>
<dbReference type="Gene3D" id="3.40.50.300">
    <property type="entry name" value="P-loop containing nucleotide triphosphate hydrolases"/>
    <property type="match status" value="1"/>
</dbReference>
<dbReference type="Gene3D" id="1.20.58.760">
    <property type="entry name" value="Peptidase M41"/>
    <property type="match status" value="1"/>
</dbReference>
<dbReference type="HAMAP" id="MF_01458">
    <property type="entry name" value="FtsH"/>
    <property type="match status" value="1"/>
</dbReference>
<dbReference type="InterPro" id="IPR003593">
    <property type="entry name" value="AAA+_ATPase"/>
</dbReference>
<dbReference type="InterPro" id="IPR041569">
    <property type="entry name" value="AAA_lid_3"/>
</dbReference>
<dbReference type="InterPro" id="IPR050928">
    <property type="entry name" value="ATP-dep_Zn_Metalloprotease"/>
</dbReference>
<dbReference type="InterPro" id="IPR003959">
    <property type="entry name" value="ATPase_AAA_core"/>
</dbReference>
<dbReference type="InterPro" id="IPR003960">
    <property type="entry name" value="ATPase_AAA_CS"/>
</dbReference>
<dbReference type="InterPro" id="IPR005936">
    <property type="entry name" value="FtsH"/>
</dbReference>
<dbReference type="InterPro" id="IPR027417">
    <property type="entry name" value="P-loop_NTPase"/>
</dbReference>
<dbReference type="InterPro" id="IPR000642">
    <property type="entry name" value="Peptidase_M41"/>
</dbReference>
<dbReference type="InterPro" id="IPR037219">
    <property type="entry name" value="Peptidase_M41-like"/>
</dbReference>
<dbReference type="NCBIfam" id="TIGR01241">
    <property type="entry name" value="FtsH_fam"/>
    <property type="match status" value="1"/>
</dbReference>
<dbReference type="PANTHER" id="PTHR43655:SF2">
    <property type="entry name" value="AFG3 LIKE MATRIX AAA PEPTIDASE SUBUNIT 2, ISOFORM A"/>
    <property type="match status" value="1"/>
</dbReference>
<dbReference type="PANTHER" id="PTHR43655">
    <property type="entry name" value="ATP-DEPENDENT PROTEASE"/>
    <property type="match status" value="1"/>
</dbReference>
<dbReference type="Pfam" id="PF00004">
    <property type="entry name" value="AAA"/>
    <property type="match status" value="1"/>
</dbReference>
<dbReference type="Pfam" id="PF17862">
    <property type="entry name" value="AAA_lid_3"/>
    <property type="match status" value="1"/>
</dbReference>
<dbReference type="Pfam" id="PF01434">
    <property type="entry name" value="Peptidase_M41"/>
    <property type="match status" value="1"/>
</dbReference>
<dbReference type="SMART" id="SM00382">
    <property type="entry name" value="AAA"/>
    <property type="match status" value="1"/>
</dbReference>
<dbReference type="SUPFAM" id="SSF140990">
    <property type="entry name" value="FtsH protease domain-like"/>
    <property type="match status" value="1"/>
</dbReference>
<dbReference type="SUPFAM" id="SSF52540">
    <property type="entry name" value="P-loop containing nucleoside triphosphate hydrolases"/>
    <property type="match status" value="1"/>
</dbReference>
<dbReference type="PROSITE" id="PS00674">
    <property type="entry name" value="AAA"/>
    <property type="match status" value="1"/>
</dbReference>
<feature type="chain" id="PRO_0000400360" description="ATP-dependent zinc metalloprotease FtsH">
    <location>
        <begin position="1"/>
        <end position="707"/>
    </location>
</feature>
<feature type="topological domain" description="Cytoplasmic" evidence="1">
    <location>
        <begin position="1"/>
        <end position="25"/>
    </location>
</feature>
<feature type="transmembrane region" description="Helical" evidence="1">
    <location>
        <begin position="26"/>
        <end position="46"/>
    </location>
</feature>
<feature type="topological domain" description="Extracellular" evidence="1">
    <location>
        <begin position="47"/>
        <end position="128"/>
    </location>
</feature>
<feature type="transmembrane region" description="Helical" evidence="1">
    <location>
        <begin position="129"/>
        <end position="149"/>
    </location>
</feature>
<feature type="topological domain" description="Cytoplasmic" evidence="1">
    <location>
        <begin position="150"/>
        <end position="707"/>
    </location>
</feature>
<feature type="active site" evidence="1">
    <location>
        <position position="469"/>
    </location>
</feature>
<feature type="binding site" evidence="1">
    <location>
        <begin position="246"/>
        <end position="253"/>
    </location>
    <ligand>
        <name>ATP</name>
        <dbReference type="ChEBI" id="CHEBI:30616"/>
    </ligand>
</feature>
<feature type="binding site" evidence="1">
    <location>
        <position position="468"/>
    </location>
    <ligand>
        <name>Zn(2+)</name>
        <dbReference type="ChEBI" id="CHEBI:29105"/>
        <note>catalytic</note>
    </ligand>
</feature>
<feature type="binding site" evidence="1">
    <location>
        <position position="472"/>
    </location>
    <ligand>
        <name>Zn(2+)</name>
        <dbReference type="ChEBI" id="CHEBI:29105"/>
        <note>catalytic</note>
    </ligand>
</feature>
<feature type="binding site" evidence="1">
    <location>
        <position position="546"/>
    </location>
    <ligand>
        <name>Zn(2+)</name>
        <dbReference type="ChEBI" id="CHEBI:29105"/>
        <note>catalytic</note>
    </ligand>
</feature>
<name>FTSH_MYCM1</name>
<keyword id="KW-0067">ATP-binding</keyword>
<keyword id="KW-1003">Cell membrane</keyword>
<keyword id="KW-0378">Hydrolase</keyword>
<keyword id="KW-0472">Membrane</keyword>
<keyword id="KW-0479">Metal-binding</keyword>
<keyword id="KW-0482">Metalloprotease</keyword>
<keyword id="KW-0547">Nucleotide-binding</keyword>
<keyword id="KW-0645">Protease</keyword>
<keyword id="KW-1185">Reference proteome</keyword>
<keyword id="KW-0812">Transmembrane</keyword>
<keyword id="KW-1133">Transmembrane helix</keyword>
<keyword id="KW-0862">Zinc</keyword>
<comment type="function">
    <text evidence="1">Acts as a processive, ATP-dependent zinc metallopeptidase for both cytoplasmic and membrane proteins. Plays a role in the quality control of integral membrane proteins.</text>
</comment>
<comment type="cofactor">
    <cofactor evidence="1">
        <name>Zn(2+)</name>
        <dbReference type="ChEBI" id="CHEBI:29105"/>
    </cofactor>
    <text evidence="1">Binds 1 zinc ion per subunit.</text>
</comment>
<comment type="subunit">
    <text evidence="1">Homohexamer.</text>
</comment>
<comment type="subcellular location">
    <subcellularLocation>
        <location evidence="1">Cell membrane</location>
        <topology evidence="1">Multi-pass membrane protein</topology>
        <orientation evidence="1">Cytoplasmic side</orientation>
    </subcellularLocation>
</comment>
<comment type="similarity">
    <text evidence="1">In the central section; belongs to the AAA ATPase family.</text>
</comment>
<comment type="similarity">
    <text evidence="1">In the C-terminal section; belongs to the peptidase M41 family.</text>
</comment>
<proteinExistence type="inferred from homology"/>
<protein>
    <recommendedName>
        <fullName evidence="1">ATP-dependent zinc metalloprotease FtsH</fullName>
        <ecNumber evidence="1">3.4.24.-</ecNumber>
    </recommendedName>
</protein>
<organism>
    <name type="scientific">Mycoplasma mobile (strain ATCC 43663 / 163K / NCTC 11711)</name>
    <name type="common">Mesomycoplasma mobile</name>
    <dbReference type="NCBI Taxonomy" id="267748"/>
    <lineage>
        <taxon>Bacteria</taxon>
        <taxon>Bacillati</taxon>
        <taxon>Mycoplasmatota</taxon>
        <taxon>Mycoplasmoidales</taxon>
        <taxon>Metamycoplasmataceae</taxon>
        <taxon>Mesomycoplasma</taxon>
    </lineage>
</organism>